<sequence length="202" mass="23549">MPPRPRFDRRAPERELPNINERISYSSLRVVDSDGTQLGVISREDALEVAKERELDLVLVSEKATPPVCRIMNYGKFKFEQEKKAKEAKKKSHQTEVKEVKMRYKIDQHDYQVRISQATRFLKAGDKVKCTVIFRGREIQHTALAETLLKRMAKDLEEKAEVQQSPKREGRNMIMFLTPRKTPLLKKESEITEPKKALRTID</sequence>
<evidence type="ECO:0000255" key="1">
    <source>
        <dbReference type="HAMAP-Rule" id="MF_00080"/>
    </source>
</evidence>
<accession>Q46IH3</accession>
<name>IF3_PROMT</name>
<organism>
    <name type="scientific">Prochlorococcus marinus (strain NATL2A)</name>
    <dbReference type="NCBI Taxonomy" id="59920"/>
    <lineage>
        <taxon>Bacteria</taxon>
        <taxon>Bacillati</taxon>
        <taxon>Cyanobacteriota</taxon>
        <taxon>Cyanophyceae</taxon>
        <taxon>Synechococcales</taxon>
        <taxon>Prochlorococcaceae</taxon>
        <taxon>Prochlorococcus</taxon>
    </lineage>
</organism>
<keyword id="KW-0963">Cytoplasm</keyword>
<keyword id="KW-0396">Initiation factor</keyword>
<keyword id="KW-0648">Protein biosynthesis</keyword>
<keyword id="KW-1185">Reference proteome</keyword>
<gene>
    <name evidence="1" type="primary">infC</name>
    <name type="ordered locus">PMN2A_1215</name>
</gene>
<dbReference type="EMBL" id="CP000095">
    <property type="protein sequence ID" value="AAZ58705.1"/>
    <property type="molecule type" value="Genomic_DNA"/>
</dbReference>
<dbReference type="RefSeq" id="WP_011295559.1">
    <property type="nucleotide sequence ID" value="NC_007335.2"/>
</dbReference>
<dbReference type="SMR" id="Q46IH3"/>
<dbReference type="STRING" id="59920.PMN2A_1215"/>
<dbReference type="KEGG" id="pmn:PMN2A_1215"/>
<dbReference type="HOGENOM" id="CLU_054919_3_2_3"/>
<dbReference type="OrthoDB" id="9806014at2"/>
<dbReference type="PhylomeDB" id="Q46IH3"/>
<dbReference type="Proteomes" id="UP000002535">
    <property type="component" value="Chromosome"/>
</dbReference>
<dbReference type="GO" id="GO:0005829">
    <property type="term" value="C:cytosol"/>
    <property type="evidence" value="ECO:0007669"/>
    <property type="project" value="TreeGrafter"/>
</dbReference>
<dbReference type="GO" id="GO:0016020">
    <property type="term" value="C:membrane"/>
    <property type="evidence" value="ECO:0007669"/>
    <property type="project" value="TreeGrafter"/>
</dbReference>
<dbReference type="GO" id="GO:0043022">
    <property type="term" value="F:ribosome binding"/>
    <property type="evidence" value="ECO:0007669"/>
    <property type="project" value="TreeGrafter"/>
</dbReference>
<dbReference type="GO" id="GO:0003743">
    <property type="term" value="F:translation initiation factor activity"/>
    <property type="evidence" value="ECO:0007669"/>
    <property type="project" value="UniProtKB-UniRule"/>
</dbReference>
<dbReference type="GO" id="GO:0032790">
    <property type="term" value="P:ribosome disassembly"/>
    <property type="evidence" value="ECO:0007669"/>
    <property type="project" value="TreeGrafter"/>
</dbReference>
<dbReference type="FunFam" id="3.10.20.80:FF:000001">
    <property type="entry name" value="Translation initiation factor IF-3"/>
    <property type="match status" value="1"/>
</dbReference>
<dbReference type="FunFam" id="3.30.110.10:FF:000001">
    <property type="entry name" value="Translation initiation factor IF-3"/>
    <property type="match status" value="1"/>
</dbReference>
<dbReference type="Gene3D" id="3.30.110.10">
    <property type="entry name" value="Translation initiation factor 3 (IF-3), C-terminal domain"/>
    <property type="match status" value="1"/>
</dbReference>
<dbReference type="Gene3D" id="3.10.20.80">
    <property type="entry name" value="Translation initiation factor 3 (IF-3), N-terminal domain"/>
    <property type="match status" value="1"/>
</dbReference>
<dbReference type="HAMAP" id="MF_00080">
    <property type="entry name" value="IF_3"/>
    <property type="match status" value="1"/>
</dbReference>
<dbReference type="InterPro" id="IPR036788">
    <property type="entry name" value="T_IF-3_C_sf"/>
</dbReference>
<dbReference type="InterPro" id="IPR036787">
    <property type="entry name" value="T_IF-3_N_sf"/>
</dbReference>
<dbReference type="InterPro" id="IPR019813">
    <property type="entry name" value="Translation_initiation_fac3_CS"/>
</dbReference>
<dbReference type="InterPro" id="IPR001288">
    <property type="entry name" value="Translation_initiation_fac_3"/>
</dbReference>
<dbReference type="InterPro" id="IPR019815">
    <property type="entry name" value="Translation_initiation_fac_3_C"/>
</dbReference>
<dbReference type="InterPro" id="IPR019814">
    <property type="entry name" value="Translation_initiation_fac_3_N"/>
</dbReference>
<dbReference type="NCBIfam" id="TIGR00168">
    <property type="entry name" value="infC"/>
    <property type="match status" value="1"/>
</dbReference>
<dbReference type="PANTHER" id="PTHR10938">
    <property type="entry name" value="TRANSLATION INITIATION FACTOR IF-3"/>
    <property type="match status" value="1"/>
</dbReference>
<dbReference type="PANTHER" id="PTHR10938:SF0">
    <property type="entry name" value="TRANSLATION INITIATION FACTOR IF-3, MITOCHONDRIAL"/>
    <property type="match status" value="1"/>
</dbReference>
<dbReference type="Pfam" id="PF00707">
    <property type="entry name" value="IF3_C"/>
    <property type="match status" value="1"/>
</dbReference>
<dbReference type="Pfam" id="PF05198">
    <property type="entry name" value="IF3_N"/>
    <property type="match status" value="1"/>
</dbReference>
<dbReference type="SUPFAM" id="SSF55200">
    <property type="entry name" value="Translation initiation factor IF3, C-terminal domain"/>
    <property type="match status" value="1"/>
</dbReference>
<dbReference type="SUPFAM" id="SSF54364">
    <property type="entry name" value="Translation initiation factor IF3, N-terminal domain"/>
    <property type="match status" value="1"/>
</dbReference>
<dbReference type="PROSITE" id="PS00938">
    <property type="entry name" value="IF3"/>
    <property type="match status" value="1"/>
</dbReference>
<protein>
    <recommendedName>
        <fullName evidence="1">Translation initiation factor IF-3</fullName>
    </recommendedName>
</protein>
<feature type="chain" id="PRO_1000004558" description="Translation initiation factor IF-3">
    <location>
        <begin position="1"/>
        <end position="202"/>
    </location>
</feature>
<reference key="1">
    <citation type="journal article" date="2007" name="PLoS Genet.">
        <title>Patterns and implications of gene gain and loss in the evolution of Prochlorococcus.</title>
        <authorList>
            <person name="Kettler G.C."/>
            <person name="Martiny A.C."/>
            <person name="Huang K."/>
            <person name="Zucker J."/>
            <person name="Coleman M.L."/>
            <person name="Rodrigue S."/>
            <person name="Chen F."/>
            <person name="Lapidus A."/>
            <person name="Ferriera S."/>
            <person name="Johnson J."/>
            <person name="Steglich C."/>
            <person name="Church G.M."/>
            <person name="Richardson P."/>
            <person name="Chisholm S.W."/>
        </authorList>
    </citation>
    <scope>NUCLEOTIDE SEQUENCE [LARGE SCALE GENOMIC DNA]</scope>
    <source>
        <strain>NATL2A</strain>
    </source>
</reference>
<comment type="function">
    <text evidence="1">IF-3 binds to the 30S ribosomal subunit and shifts the equilibrium between 70S ribosomes and their 50S and 30S subunits in favor of the free subunits, thus enhancing the availability of 30S subunits on which protein synthesis initiation begins.</text>
</comment>
<comment type="subunit">
    <text evidence="1">Monomer.</text>
</comment>
<comment type="subcellular location">
    <subcellularLocation>
        <location evidence="1">Cytoplasm</location>
    </subcellularLocation>
</comment>
<comment type="similarity">
    <text evidence="1">Belongs to the IF-3 family.</text>
</comment>
<proteinExistence type="inferred from homology"/>